<evidence type="ECO:0000255" key="1">
    <source>
        <dbReference type="HAMAP-Rule" id="MF_00003"/>
    </source>
</evidence>
<proteinExistence type="inferred from homology"/>
<name>RBFA_MYCLE</name>
<keyword id="KW-0963">Cytoplasm</keyword>
<keyword id="KW-1185">Reference proteome</keyword>
<keyword id="KW-0690">Ribosome biogenesis</keyword>
<reference key="1">
    <citation type="journal article" date="2001" name="Nature">
        <title>Massive gene decay in the leprosy bacillus.</title>
        <authorList>
            <person name="Cole S.T."/>
            <person name="Eiglmeier K."/>
            <person name="Parkhill J."/>
            <person name="James K.D."/>
            <person name="Thomson N.R."/>
            <person name="Wheeler P.R."/>
            <person name="Honore N."/>
            <person name="Garnier T."/>
            <person name="Churcher C.M."/>
            <person name="Harris D.E."/>
            <person name="Mungall K.L."/>
            <person name="Basham D."/>
            <person name="Brown D."/>
            <person name="Chillingworth T."/>
            <person name="Connor R."/>
            <person name="Davies R.M."/>
            <person name="Devlin K."/>
            <person name="Duthoy S."/>
            <person name="Feltwell T."/>
            <person name="Fraser A."/>
            <person name="Hamlin N."/>
            <person name="Holroyd S."/>
            <person name="Hornsby T."/>
            <person name="Jagels K."/>
            <person name="Lacroix C."/>
            <person name="Maclean J."/>
            <person name="Moule S."/>
            <person name="Murphy L.D."/>
            <person name="Oliver K."/>
            <person name="Quail M.A."/>
            <person name="Rajandream M.A."/>
            <person name="Rutherford K.M."/>
            <person name="Rutter S."/>
            <person name="Seeger K."/>
            <person name="Simon S."/>
            <person name="Simmonds M."/>
            <person name="Skelton J."/>
            <person name="Squares R."/>
            <person name="Squares S."/>
            <person name="Stevens K."/>
            <person name="Taylor K."/>
            <person name="Whitehead S."/>
            <person name="Woodward J.R."/>
            <person name="Barrell B.G."/>
        </authorList>
    </citation>
    <scope>NUCLEOTIDE SEQUENCE [LARGE SCALE GENOMIC DNA]</scope>
    <source>
        <strain>TN</strain>
    </source>
</reference>
<feature type="chain" id="PRO_0000102697" description="Ribosome-binding factor A">
    <location>
        <begin position="1"/>
        <end position="164"/>
    </location>
</feature>
<dbReference type="EMBL" id="AL035472">
    <property type="protein sequence ID" value="CAB36571.1"/>
    <property type="molecule type" value="Genomic_DNA"/>
</dbReference>
<dbReference type="EMBL" id="AL583922">
    <property type="protein sequence ID" value="CAC30506.1"/>
    <property type="molecule type" value="Genomic_DNA"/>
</dbReference>
<dbReference type="PIR" id="E87103">
    <property type="entry name" value="E87103"/>
</dbReference>
<dbReference type="RefSeq" id="NP_302080.1">
    <property type="nucleotide sequence ID" value="NC_002677.1"/>
</dbReference>
<dbReference type="RefSeq" id="WP_010908401.1">
    <property type="nucleotide sequence ID" value="NC_002677.1"/>
</dbReference>
<dbReference type="SMR" id="Q9Z5I8"/>
<dbReference type="STRING" id="272631.gene:17575396"/>
<dbReference type="KEGG" id="mle:ML1555"/>
<dbReference type="PATRIC" id="fig|272631.5.peg.2935"/>
<dbReference type="Leproma" id="ML1555"/>
<dbReference type="eggNOG" id="COG0858">
    <property type="taxonomic scope" value="Bacteria"/>
</dbReference>
<dbReference type="HOGENOM" id="CLU_089475_0_0_11"/>
<dbReference type="OrthoDB" id="307788at2"/>
<dbReference type="Proteomes" id="UP000000806">
    <property type="component" value="Chromosome"/>
</dbReference>
<dbReference type="GO" id="GO:0005829">
    <property type="term" value="C:cytosol"/>
    <property type="evidence" value="ECO:0007669"/>
    <property type="project" value="TreeGrafter"/>
</dbReference>
<dbReference type="GO" id="GO:0043024">
    <property type="term" value="F:ribosomal small subunit binding"/>
    <property type="evidence" value="ECO:0007669"/>
    <property type="project" value="TreeGrafter"/>
</dbReference>
<dbReference type="GO" id="GO:0030490">
    <property type="term" value="P:maturation of SSU-rRNA"/>
    <property type="evidence" value="ECO:0007669"/>
    <property type="project" value="UniProtKB-UniRule"/>
</dbReference>
<dbReference type="Gene3D" id="3.30.300.20">
    <property type="match status" value="1"/>
</dbReference>
<dbReference type="HAMAP" id="MF_00003">
    <property type="entry name" value="RbfA"/>
    <property type="match status" value="1"/>
</dbReference>
<dbReference type="InterPro" id="IPR015946">
    <property type="entry name" value="KH_dom-like_a/b"/>
</dbReference>
<dbReference type="InterPro" id="IPR000238">
    <property type="entry name" value="RbfA"/>
</dbReference>
<dbReference type="InterPro" id="IPR023799">
    <property type="entry name" value="RbfA_dom_sf"/>
</dbReference>
<dbReference type="InterPro" id="IPR020053">
    <property type="entry name" value="Ribosome-bd_factorA_CS"/>
</dbReference>
<dbReference type="NCBIfam" id="TIGR00082">
    <property type="entry name" value="rbfA"/>
    <property type="match status" value="1"/>
</dbReference>
<dbReference type="PANTHER" id="PTHR33515">
    <property type="entry name" value="RIBOSOME-BINDING FACTOR A, CHLOROPLASTIC-RELATED"/>
    <property type="match status" value="1"/>
</dbReference>
<dbReference type="PANTHER" id="PTHR33515:SF1">
    <property type="entry name" value="RIBOSOME-BINDING FACTOR A, CHLOROPLASTIC-RELATED"/>
    <property type="match status" value="1"/>
</dbReference>
<dbReference type="Pfam" id="PF02033">
    <property type="entry name" value="RBFA"/>
    <property type="match status" value="1"/>
</dbReference>
<dbReference type="SUPFAM" id="SSF89919">
    <property type="entry name" value="Ribosome-binding factor A, RbfA"/>
    <property type="match status" value="1"/>
</dbReference>
<dbReference type="PROSITE" id="PS01319">
    <property type="entry name" value="RBFA"/>
    <property type="match status" value="1"/>
</dbReference>
<comment type="function">
    <text evidence="1">One of several proteins that assist in the late maturation steps of the functional core of the 30S ribosomal subunit. Associates with free 30S ribosomal subunits (but not with 30S subunits that are part of 70S ribosomes or polysomes). Required for efficient processing of 16S rRNA. May interact with the 5'-terminal helix region of 16S rRNA.</text>
</comment>
<comment type="subunit">
    <text evidence="1">Monomer. Binds 30S ribosomal subunits, but not 50S ribosomal subunits or 70S ribosomes.</text>
</comment>
<comment type="subcellular location">
    <subcellularLocation>
        <location evidence="1">Cytoplasm</location>
    </subcellularLocation>
</comment>
<comment type="similarity">
    <text evidence="1">Belongs to the RbfA family.</text>
</comment>
<protein>
    <recommendedName>
        <fullName evidence="1">Ribosome-binding factor A</fullName>
    </recommendedName>
</protein>
<accession>Q9Z5I8</accession>
<organism>
    <name type="scientific">Mycobacterium leprae (strain TN)</name>
    <dbReference type="NCBI Taxonomy" id="272631"/>
    <lineage>
        <taxon>Bacteria</taxon>
        <taxon>Bacillati</taxon>
        <taxon>Actinomycetota</taxon>
        <taxon>Actinomycetes</taxon>
        <taxon>Mycobacteriales</taxon>
        <taxon>Mycobacteriaceae</taxon>
        <taxon>Mycobacterium</taxon>
    </lineage>
</organism>
<sequence>MADQARARRLAKRICTIVASAIEFEIKDPGLDGVTIVDVKVTADLHDATVFYTVMGRTLEDAPDYTAATAALNRAKGTLRSKVGAGTGVRFTPTLTFIRDTTSDSVARMEELLARARAADADVAQVRLRAKPAGEADPYRDKGSVAGLVGVDIADIDDDDLTDD</sequence>
<gene>
    <name evidence="1" type="primary">rbfA</name>
    <name type="ordered locus">ML1555</name>
    <name type="ORF">MLCB596.15</name>
</gene>